<keyword id="KW-0479">Metal-binding</keyword>
<keyword id="KW-1185">Reference proteome</keyword>
<keyword id="KW-0687">Ribonucleoprotein</keyword>
<keyword id="KW-0689">Ribosomal protein</keyword>
<keyword id="KW-0694">RNA-binding</keyword>
<keyword id="KW-0699">rRNA-binding</keyword>
<keyword id="KW-0862">Zinc</keyword>
<feature type="chain" id="PRO_0000173119" description="Large ribosomal subunit protein bL31">
    <location>
        <begin position="1"/>
        <end position="75"/>
    </location>
</feature>
<feature type="binding site" evidence="1">
    <location>
        <position position="16"/>
    </location>
    <ligand>
        <name>Zn(2+)</name>
        <dbReference type="ChEBI" id="CHEBI:29105"/>
    </ligand>
</feature>
<feature type="binding site" evidence="1">
    <location>
        <position position="18"/>
    </location>
    <ligand>
        <name>Zn(2+)</name>
        <dbReference type="ChEBI" id="CHEBI:29105"/>
    </ligand>
</feature>
<feature type="binding site" evidence="1">
    <location>
        <position position="37"/>
    </location>
    <ligand>
        <name>Zn(2+)</name>
        <dbReference type="ChEBI" id="CHEBI:29105"/>
    </ligand>
</feature>
<feature type="binding site" evidence="1">
    <location>
        <position position="40"/>
    </location>
    <ligand>
        <name>Zn(2+)</name>
        <dbReference type="ChEBI" id="CHEBI:29105"/>
    </ligand>
</feature>
<accession>Q5ZXT1</accession>
<gene>
    <name evidence="1" type="primary">rpmE</name>
    <name type="ordered locus">lpg0650</name>
</gene>
<sequence>MKASVHPDYQTVKVTCSCGEVFETRSTLCKDLNIEVCSMCHPFYTGKQKLVDTGGRVQKFRDRYNMRTGQAKSKE</sequence>
<dbReference type="EMBL" id="AE017354">
    <property type="protein sequence ID" value="AAU26739.1"/>
    <property type="molecule type" value="Genomic_DNA"/>
</dbReference>
<dbReference type="RefSeq" id="WP_010946387.1">
    <property type="nucleotide sequence ID" value="NC_002942.5"/>
</dbReference>
<dbReference type="RefSeq" id="YP_094686.1">
    <property type="nucleotide sequence ID" value="NC_002942.5"/>
</dbReference>
<dbReference type="SMR" id="Q5ZXT1"/>
<dbReference type="STRING" id="272624.lpg0650"/>
<dbReference type="PaxDb" id="272624-lpg0650"/>
<dbReference type="GeneID" id="57034644"/>
<dbReference type="KEGG" id="lpn:lpg0650"/>
<dbReference type="PATRIC" id="fig|272624.6.peg.670"/>
<dbReference type="eggNOG" id="COG0254">
    <property type="taxonomic scope" value="Bacteria"/>
</dbReference>
<dbReference type="HOGENOM" id="CLU_114306_4_2_6"/>
<dbReference type="OrthoDB" id="9803251at2"/>
<dbReference type="Proteomes" id="UP000000609">
    <property type="component" value="Chromosome"/>
</dbReference>
<dbReference type="GO" id="GO:1990904">
    <property type="term" value="C:ribonucleoprotein complex"/>
    <property type="evidence" value="ECO:0007669"/>
    <property type="project" value="UniProtKB-KW"/>
</dbReference>
<dbReference type="GO" id="GO:0005840">
    <property type="term" value="C:ribosome"/>
    <property type="evidence" value="ECO:0007669"/>
    <property type="project" value="UniProtKB-KW"/>
</dbReference>
<dbReference type="GO" id="GO:0046872">
    <property type="term" value="F:metal ion binding"/>
    <property type="evidence" value="ECO:0007669"/>
    <property type="project" value="UniProtKB-KW"/>
</dbReference>
<dbReference type="GO" id="GO:0019843">
    <property type="term" value="F:rRNA binding"/>
    <property type="evidence" value="ECO:0007669"/>
    <property type="project" value="UniProtKB-KW"/>
</dbReference>
<dbReference type="GO" id="GO:0003735">
    <property type="term" value="F:structural constituent of ribosome"/>
    <property type="evidence" value="ECO:0007669"/>
    <property type="project" value="InterPro"/>
</dbReference>
<dbReference type="GO" id="GO:0006412">
    <property type="term" value="P:translation"/>
    <property type="evidence" value="ECO:0007669"/>
    <property type="project" value="UniProtKB-UniRule"/>
</dbReference>
<dbReference type="Gene3D" id="4.10.830.30">
    <property type="entry name" value="Ribosomal protein L31"/>
    <property type="match status" value="1"/>
</dbReference>
<dbReference type="HAMAP" id="MF_00501">
    <property type="entry name" value="Ribosomal_bL31_1"/>
    <property type="match status" value="1"/>
</dbReference>
<dbReference type="InterPro" id="IPR034704">
    <property type="entry name" value="Ribosomal_bL28/bL31-like_sf"/>
</dbReference>
<dbReference type="InterPro" id="IPR002150">
    <property type="entry name" value="Ribosomal_bL31"/>
</dbReference>
<dbReference type="InterPro" id="IPR027491">
    <property type="entry name" value="Ribosomal_bL31_A"/>
</dbReference>
<dbReference type="InterPro" id="IPR042105">
    <property type="entry name" value="Ribosomal_bL31_sf"/>
</dbReference>
<dbReference type="NCBIfam" id="TIGR00105">
    <property type="entry name" value="L31"/>
    <property type="match status" value="1"/>
</dbReference>
<dbReference type="NCBIfam" id="NF000612">
    <property type="entry name" value="PRK00019.1"/>
    <property type="match status" value="1"/>
</dbReference>
<dbReference type="NCBIfam" id="NF001809">
    <property type="entry name" value="PRK00528.1"/>
    <property type="match status" value="1"/>
</dbReference>
<dbReference type="PANTHER" id="PTHR33280">
    <property type="entry name" value="50S RIBOSOMAL PROTEIN L31, CHLOROPLASTIC"/>
    <property type="match status" value="1"/>
</dbReference>
<dbReference type="PANTHER" id="PTHR33280:SF6">
    <property type="entry name" value="LARGE RIBOSOMAL SUBUNIT PROTEIN BL31A"/>
    <property type="match status" value="1"/>
</dbReference>
<dbReference type="Pfam" id="PF01197">
    <property type="entry name" value="Ribosomal_L31"/>
    <property type="match status" value="1"/>
</dbReference>
<dbReference type="PRINTS" id="PR01249">
    <property type="entry name" value="RIBOSOMALL31"/>
</dbReference>
<dbReference type="SUPFAM" id="SSF143800">
    <property type="entry name" value="L28p-like"/>
    <property type="match status" value="1"/>
</dbReference>
<dbReference type="PROSITE" id="PS01143">
    <property type="entry name" value="RIBOSOMAL_L31"/>
    <property type="match status" value="1"/>
</dbReference>
<proteinExistence type="inferred from homology"/>
<name>RL31_LEGPH</name>
<comment type="function">
    <text evidence="1">Binds the 23S rRNA.</text>
</comment>
<comment type="cofactor">
    <cofactor evidence="1">
        <name>Zn(2+)</name>
        <dbReference type="ChEBI" id="CHEBI:29105"/>
    </cofactor>
    <text evidence="1">Binds 1 zinc ion per subunit.</text>
</comment>
<comment type="subunit">
    <text evidence="1">Part of the 50S ribosomal subunit.</text>
</comment>
<comment type="similarity">
    <text evidence="1">Belongs to the bacterial ribosomal protein bL31 family. Type A subfamily.</text>
</comment>
<reference key="1">
    <citation type="journal article" date="2004" name="Science">
        <title>The genomic sequence of the accidental pathogen Legionella pneumophila.</title>
        <authorList>
            <person name="Chien M."/>
            <person name="Morozova I."/>
            <person name="Shi S."/>
            <person name="Sheng H."/>
            <person name="Chen J."/>
            <person name="Gomez S.M."/>
            <person name="Asamani G."/>
            <person name="Hill K."/>
            <person name="Nuara J."/>
            <person name="Feder M."/>
            <person name="Rineer J."/>
            <person name="Greenberg J.J."/>
            <person name="Steshenko V."/>
            <person name="Park S.H."/>
            <person name="Zhao B."/>
            <person name="Teplitskaya E."/>
            <person name="Edwards J.R."/>
            <person name="Pampou S."/>
            <person name="Georghiou A."/>
            <person name="Chou I.-C."/>
            <person name="Iannuccilli W."/>
            <person name="Ulz M.E."/>
            <person name="Kim D.H."/>
            <person name="Geringer-Sameth A."/>
            <person name="Goldsberry C."/>
            <person name="Morozov P."/>
            <person name="Fischer S.G."/>
            <person name="Segal G."/>
            <person name="Qu X."/>
            <person name="Rzhetsky A."/>
            <person name="Zhang P."/>
            <person name="Cayanis E."/>
            <person name="De Jong P.J."/>
            <person name="Ju J."/>
            <person name="Kalachikov S."/>
            <person name="Shuman H.A."/>
            <person name="Russo J.J."/>
        </authorList>
    </citation>
    <scope>NUCLEOTIDE SEQUENCE [LARGE SCALE GENOMIC DNA]</scope>
    <source>
        <strain>Philadelphia 1 / ATCC 33152 / DSM 7513</strain>
    </source>
</reference>
<organism>
    <name type="scientific">Legionella pneumophila subsp. pneumophila (strain Philadelphia 1 / ATCC 33152 / DSM 7513)</name>
    <dbReference type="NCBI Taxonomy" id="272624"/>
    <lineage>
        <taxon>Bacteria</taxon>
        <taxon>Pseudomonadati</taxon>
        <taxon>Pseudomonadota</taxon>
        <taxon>Gammaproteobacteria</taxon>
        <taxon>Legionellales</taxon>
        <taxon>Legionellaceae</taxon>
        <taxon>Legionella</taxon>
    </lineage>
</organism>
<evidence type="ECO:0000255" key="1">
    <source>
        <dbReference type="HAMAP-Rule" id="MF_00501"/>
    </source>
</evidence>
<evidence type="ECO:0000305" key="2"/>
<protein>
    <recommendedName>
        <fullName evidence="1">Large ribosomal subunit protein bL31</fullName>
    </recommendedName>
    <alternativeName>
        <fullName evidence="2">50S ribosomal protein L31</fullName>
    </alternativeName>
</protein>